<organism>
    <name type="scientific">Saccharomyces cerevisiae (strain ATCC 204508 / S288c)</name>
    <name type="common">Baker's yeast</name>
    <dbReference type="NCBI Taxonomy" id="559292"/>
    <lineage>
        <taxon>Eukaryota</taxon>
        <taxon>Fungi</taxon>
        <taxon>Dikarya</taxon>
        <taxon>Ascomycota</taxon>
        <taxon>Saccharomycotina</taxon>
        <taxon>Saccharomycetes</taxon>
        <taxon>Saccharomycetales</taxon>
        <taxon>Saccharomycetaceae</taxon>
        <taxon>Saccharomyces</taxon>
    </lineage>
</organism>
<dbReference type="EC" id="2.6.1.57" evidence="7 13"/>
<dbReference type="EC" id="2.6.1.7" evidence="14"/>
<dbReference type="EMBL" id="Y13625">
    <property type="protein sequence ID" value="CAA73950.1"/>
    <property type="molecule type" value="Genomic_DNA"/>
</dbReference>
<dbReference type="EMBL" id="U10398">
    <property type="protein sequence ID" value="AAB68403.1"/>
    <property type="molecule type" value="Genomic_DNA"/>
</dbReference>
<dbReference type="EMBL" id="BK006934">
    <property type="protein sequence ID" value="DAA06830.1"/>
    <property type="molecule type" value="Genomic_DNA"/>
</dbReference>
<dbReference type="PIR" id="S48981">
    <property type="entry name" value="S48981"/>
</dbReference>
<dbReference type="RefSeq" id="NP_012005.1">
    <property type="nucleotide sequence ID" value="NM_001179267.1"/>
</dbReference>
<dbReference type="SMR" id="P38840"/>
<dbReference type="BioGRID" id="36570">
    <property type="interactions" value="84"/>
</dbReference>
<dbReference type="DIP" id="DIP-4942N"/>
<dbReference type="FunCoup" id="P38840">
    <property type="interactions" value="241"/>
</dbReference>
<dbReference type="IntAct" id="P38840">
    <property type="interactions" value="15"/>
</dbReference>
<dbReference type="MINT" id="P38840"/>
<dbReference type="STRING" id="4932.YHR137W"/>
<dbReference type="iPTMnet" id="P38840"/>
<dbReference type="PaxDb" id="4932-YHR137W"/>
<dbReference type="PeptideAtlas" id="P38840"/>
<dbReference type="EnsemblFungi" id="YHR137W_mRNA">
    <property type="protein sequence ID" value="YHR137W"/>
    <property type="gene ID" value="YHR137W"/>
</dbReference>
<dbReference type="GeneID" id="856539"/>
<dbReference type="KEGG" id="sce:YHR137W"/>
<dbReference type="AGR" id="SGD:S000001179"/>
<dbReference type="SGD" id="S000001179">
    <property type="gene designation" value="ARO9"/>
</dbReference>
<dbReference type="VEuPathDB" id="FungiDB:YHR137W"/>
<dbReference type="eggNOG" id="KOG0634">
    <property type="taxonomic scope" value="Eukaryota"/>
</dbReference>
<dbReference type="GeneTree" id="ENSGT00390000004594"/>
<dbReference type="HOGENOM" id="CLU_017584_0_5_1"/>
<dbReference type="InParanoid" id="P38840"/>
<dbReference type="OMA" id="YAPANND"/>
<dbReference type="OrthoDB" id="691673at2759"/>
<dbReference type="BioCyc" id="MetaCyc:YHR137W-MONOMER"/>
<dbReference type="BioCyc" id="YEAST:YHR137W-MONOMER"/>
<dbReference type="BRENDA" id="2.6.1.57">
    <property type="organism ID" value="984"/>
</dbReference>
<dbReference type="Reactome" id="R-SCE-71064">
    <property type="pathway name" value="Lysine catabolism"/>
</dbReference>
<dbReference type="Reactome" id="R-SCE-71240">
    <property type="pathway name" value="Tryptophan catabolism"/>
</dbReference>
<dbReference type="SABIO-RK" id="P38840"/>
<dbReference type="UniPathway" id="UPA00334">
    <property type="reaction ID" value="UER00726"/>
</dbReference>
<dbReference type="UniPathway" id="UPA00904">
    <property type="reaction ID" value="UER00879"/>
</dbReference>
<dbReference type="BioGRID-ORCS" id="856539">
    <property type="hits" value="0 hits in 10 CRISPR screens"/>
</dbReference>
<dbReference type="CD-CODE" id="E03F929F">
    <property type="entry name" value="Stress granule"/>
</dbReference>
<dbReference type="PRO" id="PR:P38840"/>
<dbReference type="Proteomes" id="UP000002311">
    <property type="component" value="Chromosome VIII"/>
</dbReference>
<dbReference type="RNAct" id="P38840">
    <property type="molecule type" value="protein"/>
</dbReference>
<dbReference type="GO" id="GO:0005737">
    <property type="term" value="C:cytoplasm"/>
    <property type="evidence" value="ECO:0007005"/>
    <property type="project" value="SGD"/>
</dbReference>
<dbReference type="GO" id="GO:0005634">
    <property type="term" value="C:nucleus"/>
    <property type="evidence" value="ECO:0007005"/>
    <property type="project" value="SGD"/>
</dbReference>
<dbReference type="GO" id="GO:0047536">
    <property type="term" value="F:2-aminoadipate transaminase activity"/>
    <property type="evidence" value="ECO:0000318"/>
    <property type="project" value="GO_Central"/>
</dbReference>
<dbReference type="GO" id="GO:0008793">
    <property type="term" value="F:aromatic-amino-acid transaminase activity"/>
    <property type="evidence" value="ECO:0000315"/>
    <property type="project" value="SGD"/>
</dbReference>
<dbReference type="GO" id="GO:0016212">
    <property type="term" value="F:kynurenine-oxoglutarate transaminase activity"/>
    <property type="evidence" value="ECO:0007669"/>
    <property type="project" value="UniProtKB-EC"/>
</dbReference>
<dbReference type="GO" id="GO:0030170">
    <property type="term" value="F:pyridoxal phosphate binding"/>
    <property type="evidence" value="ECO:0007669"/>
    <property type="project" value="InterPro"/>
</dbReference>
<dbReference type="GO" id="GO:0009074">
    <property type="term" value="P:aromatic amino acid family catabolic process"/>
    <property type="evidence" value="ECO:0000318"/>
    <property type="project" value="GO_Central"/>
</dbReference>
<dbReference type="GO" id="GO:0009072">
    <property type="term" value="P:aromatic amino acid metabolic process"/>
    <property type="evidence" value="ECO:0000315"/>
    <property type="project" value="SGD"/>
</dbReference>
<dbReference type="GO" id="GO:0097053">
    <property type="term" value="P:L-kynurenine catabolic process"/>
    <property type="evidence" value="ECO:0007669"/>
    <property type="project" value="UniProtKB-UniPathway"/>
</dbReference>
<dbReference type="GO" id="GO:0019509">
    <property type="term" value="P:L-methionine salvage from methylthioadenosine"/>
    <property type="evidence" value="ECO:0007669"/>
    <property type="project" value="UniProtKB-UniPathway"/>
</dbReference>
<dbReference type="GO" id="GO:0009094">
    <property type="term" value="P:L-phenylalanine biosynthetic process"/>
    <property type="evidence" value="ECO:0000316"/>
    <property type="project" value="SGD"/>
</dbReference>
<dbReference type="GO" id="GO:0019878">
    <property type="term" value="P:lysine biosynthetic process via aminoadipic acid"/>
    <property type="evidence" value="ECO:0000318"/>
    <property type="project" value="GO_Central"/>
</dbReference>
<dbReference type="GO" id="GO:0006571">
    <property type="term" value="P:tyrosine biosynthetic process"/>
    <property type="evidence" value="ECO:0000316"/>
    <property type="project" value="SGD"/>
</dbReference>
<dbReference type="CDD" id="cd00609">
    <property type="entry name" value="AAT_like"/>
    <property type="match status" value="1"/>
</dbReference>
<dbReference type="FunFam" id="3.40.640.10:FF:000195">
    <property type="entry name" value="ARO9p Aromatic aminotransferase II"/>
    <property type="match status" value="1"/>
</dbReference>
<dbReference type="Gene3D" id="3.40.640.10">
    <property type="entry name" value="Type I PLP-dependent aspartate aminotransferase-like (Major domain)"/>
    <property type="match status" value="1"/>
</dbReference>
<dbReference type="InterPro" id="IPR004839">
    <property type="entry name" value="Aminotransferase_I/II_large"/>
</dbReference>
<dbReference type="InterPro" id="IPR050859">
    <property type="entry name" value="Class-I_PLP-dep_aminotransf"/>
</dbReference>
<dbReference type="InterPro" id="IPR015424">
    <property type="entry name" value="PyrdxlP-dep_Trfase"/>
</dbReference>
<dbReference type="InterPro" id="IPR015421">
    <property type="entry name" value="PyrdxlP-dep_Trfase_major"/>
</dbReference>
<dbReference type="PANTHER" id="PTHR42790">
    <property type="entry name" value="AMINOTRANSFERASE"/>
    <property type="match status" value="1"/>
</dbReference>
<dbReference type="PANTHER" id="PTHR42790:SF2">
    <property type="entry name" value="AROMATIC AMINO ACID AMINOTRANSFERASE 2"/>
    <property type="match status" value="1"/>
</dbReference>
<dbReference type="Pfam" id="PF00155">
    <property type="entry name" value="Aminotran_1_2"/>
    <property type="match status" value="1"/>
</dbReference>
<dbReference type="SUPFAM" id="SSF53383">
    <property type="entry name" value="PLP-dependent transferases"/>
    <property type="match status" value="1"/>
</dbReference>
<protein>
    <recommendedName>
        <fullName evidence="10">Aromatic amino acid aminotransferase 2</fullName>
        <ecNumber evidence="7 13">2.6.1.57</ecNumber>
    </recommendedName>
    <alternativeName>
        <fullName evidence="11">Aromatic amino acid aminotransferase II</fullName>
    </alternativeName>
    <alternativeName>
        <fullName evidence="11">Aromatic amino acid-requiring protein 9</fullName>
    </alternativeName>
    <alternativeName>
        <fullName evidence="11">Kynurenine aminotransferase I</fullName>
        <shortName evidence="11">KAT I</shortName>
        <ecNumber evidence="14">2.6.1.7</ecNumber>
    </alternativeName>
</protein>
<sequence>MTAGSAPPVDYTSLKKNFQPFLSRRVENRSLKSFWDASDISDDVIELAGGMPNERFFPIESMDLKISKVPFNDNPKWHNSFTTAHLDLGSPSELPIARSFQYAETKGLPPLLHFVKDFVSRINRPAFSDETESNWDVILSGGSNDSMFKVFETICDESTTVMIEEFTFTPAMSNVEATGAKVIPIKMNLTFDRESQGIDVEYLTQLLDNWSTGPYKDLNKPRVLYTIATGQNPTGMSVPQWKREKIYQLAQRHDFLIVEDDPYGYLYFPSYNPQEPLENPYHSSDLTTERYLNDFLMKSFLTLDTDARVIRLETFSKIFAPGLRLSFIVANKFLLQKILDLADITTRAPSGTSQAIVYSTIKAMAESNLSSSLSMKEAMFEGWIRWIMQIASKYNHRKNLTLKALYETESYQAGQFTVMEPSAGMFIIIKINWGNFDRPDDLPQQMDILDKFLLKNGVKVVLGYKMAVCPNYSKQNSDFLRLTIAYARDDDQLIEASKRIGSGIKEFFDNYKS</sequence>
<proteinExistence type="evidence at protein level"/>
<comment type="function">
    <text evidence="6 7 8 9">General aromatic amino acid transaminase involved in several otherwise unrelated metabolic pathways. Mainly involved in tryptophan degradation. Active with phenylalanine, tyrosine and tryptophan as amino donors and with phenylpyruvate, hydroxyphenylpyruvate and pyruvate as amino acceptors. Does not accept glutamate or 2-oxoglutarate as substrates. Also active with methionine, leucine, glutamine and kynurenine. Catalyzes the formation of methionine from 2-keto-4-methylthiobutyrate (KMTB) in the methionine salvage pathway primarily using aromatic amino acids (tyrosine, phenylalanine and tryptophan) as the amino donors. Catalyzes the irreversible transamination of the L-tryptophan metabolite L-kynurenine to form kynurenic acid (KA) with pyruvate as amino acceptor.</text>
</comment>
<comment type="catalytic activity">
    <reaction evidence="7 13">
        <text>an aromatic L-alpha-amino acid + 2-oxoglutarate = an aromatic oxo-acid + L-glutamate</text>
        <dbReference type="Rhea" id="RHEA:17533"/>
        <dbReference type="ChEBI" id="CHEBI:16810"/>
        <dbReference type="ChEBI" id="CHEBI:29985"/>
        <dbReference type="ChEBI" id="CHEBI:73309"/>
        <dbReference type="ChEBI" id="CHEBI:84824"/>
        <dbReference type="EC" id="2.6.1.57"/>
    </reaction>
</comment>
<comment type="catalytic activity">
    <reaction evidence="7 13">
        <text>an aromatic L-alpha-amino acid + 4-methylsulfanyl-2-oxobutanoate = an aromatic oxo-acid + L-methionine</text>
        <dbReference type="Rhea" id="RHEA:47800"/>
        <dbReference type="ChEBI" id="CHEBI:16723"/>
        <dbReference type="ChEBI" id="CHEBI:57844"/>
        <dbReference type="ChEBI" id="CHEBI:73309"/>
        <dbReference type="ChEBI" id="CHEBI:84824"/>
    </reaction>
</comment>
<comment type="catalytic activity">
    <reaction evidence="14">
        <text>L-kynurenine + 2-oxoglutarate = kynurenate + L-glutamate + H2O</text>
        <dbReference type="Rhea" id="RHEA:65560"/>
        <dbReference type="ChEBI" id="CHEBI:15377"/>
        <dbReference type="ChEBI" id="CHEBI:16810"/>
        <dbReference type="ChEBI" id="CHEBI:29985"/>
        <dbReference type="ChEBI" id="CHEBI:57959"/>
        <dbReference type="ChEBI" id="CHEBI:58454"/>
        <dbReference type="EC" id="2.6.1.7"/>
    </reaction>
</comment>
<comment type="cofactor">
    <cofactor evidence="1">
        <name>pyridoxal 5'-phosphate</name>
        <dbReference type="ChEBI" id="CHEBI:597326"/>
    </cofactor>
</comment>
<comment type="biophysicochemical properties">
    <kinetics>
        <KM evidence="7">0.4 mM for tryptophan</KM>
        <KM evidence="7">0.2 mM for tyrosine</KM>
        <KM evidence="7">0.2 mM for phenylalanine</KM>
    </kinetics>
</comment>
<comment type="pathway">
    <text evidence="7">Amino-acid biosynthesis; L-methionine biosynthesis via salvage pathway; L-methionine from S-methyl-5-thio-alpha-D-ribose 1-phosphate: step 6/6.</text>
</comment>
<comment type="pathway">
    <text>Amino-acid degradation; L-kynurenine degradation; kynurenate from L-kynurenine: step 1/2.</text>
</comment>
<comment type="subcellular location">
    <subcellularLocation>
        <location evidence="4">Cytoplasm</location>
    </subcellularLocation>
</comment>
<comment type="induction">
    <text evidence="3 9">By aromatic amino acids in the growth medium. Expression also induced in ARO8 mutants grown on minimal ammonia medium.</text>
</comment>
<comment type="miscellaneous">
    <text evidence="5">Present with 7700 molecules/cell in log phase SD medium.</text>
</comment>
<comment type="similarity">
    <text evidence="12">Belongs to the class-I pyridoxal-phosphate-dependent aminotransferase family.</text>
</comment>
<feature type="chain" id="PRO_0000064679" description="Aromatic amino acid aminotransferase 2">
    <location>
        <begin position="1"/>
        <end position="513"/>
    </location>
</feature>
<feature type="binding site" evidence="2">
    <location>
        <position position="102"/>
    </location>
    <ligand>
        <name>pyridoxal 5'-phosphate</name>
        <dbReference type="ChEBI" id="CHEBI:597326"/>
    </ligand>
</feature>
<feature type="binding site" evidence="1">
    <location>
        <begin position="143"/>
        <end position="144"/>
    </location>
    <ligand>
        <name>pyridoxal 5'-phosphate</name>
        <dbReference type="ChEBI" id="CHEBI:597326"/>
    </ligand>
</feature>
<feature type="binding site" evidence="1">
    <location>
        <position position="232"/>
    </location>
    <ligand>
        <name>pyridoxal 5'-phosphate</name>
        <dbReference type="ChEBI" id="CHEBI:597326"/>
    </ligand>
</feature>
<feature type="binding site" evidence="1 2">
    <location>
        <position position="232"/>
    </location>
    <ligand>
        <name>substrate</name>
    </ligand>
</feature>
<feature type="binding site" evidence="1">
    <location>
        <position position="263"/>
    </location>
    <ligand>
        <name>pyridoxal 5'-phosphate</name>
        <dbReference type="ChEBI" id="CHEBI:597326"/>
    </ligand>
</feature>
<feature type="binding site" evidence="1">
    <location>
        <begin position="314"/>
        <end position="316"/>
    </location>
    <ligand>
        <name>pyridoxal 5'-phosphate</name>
        <dbReference type="ChEBI" id="CHEBI:597326"/>
    </ligand>
</feature>
<feature type="binding site" evidence="2">
    <location>
        <position position="324"/>
    </location>
    <ligand>
        <name>pyridoxal 5'-phosphate</name>
        <dbReference type="ChEBI" id="CHEBI:597326"/>
    </ligand>
</feature>
<feature type="binding site" evidence="2">
    <location>
        <position position="481"/>
    </location>
    <ligand>
        <name>substrate</name>
    </ligand>
</feature>
<feature type="modified residue" description="Phosphoserine" evidence="15">
    <location>
        <position position="90"/>
    </location>
</feature>
<feature type="modified residue" description="Phosphoserine" evidence="15">
    <location>
        <position position="92"/>
    </location>
</feature>
<feature type="modified residue" description="N6-(pyridoxal phosphate)lysine" evidence="1">
    <location>
        <position position="317"/>
    </location>
</feature>
<feature type="sequence conflict" description="In Ref. 1; CAA73950." evidence="12" ref="1">
    <original>V</original>
    <variation>L</variation>
    <location>
        <position position="460"/>
    </location>
</feature>
<keyword id="KW-0032">Aminotransferase</keyword>
<keyword id="KW-0963">Cytoplasm</keyword>
<keyword id="KW-0597">Phosphoprotein</keyword>
<keyword id="KW-0663">Pyridoxal phosphate</keyword>
<keyword id="KW-1185">Reference proteome</keyword>
<keyword id="KW-0808">Transferase</keyword>
<accession>P38840</accession>
<accession>D3DL86</accession>
<accession>P87291</accession>
<evidence type="ECO:0000250" key="1">
    <source>
        <dbReference type="UniProtKB" id="O84395"/>
    </source>
</evidence>
<evidence type="ECO:0000250" key="2">
    <source>
        <dbReference type="UniProtKB" id="Q93ZN9"/>
    </source>
</evidence>
<evidence type="ECO:0000269" key="3">
    <source>
    </source>
</evidence>
<evidence type="ECO:0000269" key="4">
    <source>
    </source>
</evidence>
<evidence type="ECO:0000269" key="5">
    <source>
    </source>
</evidence>
<evidence type="ECO:0000269" key="6">
    <source>
    </source>
</evidence>
<evidence type="ECO:0000269" key="7">
    <source>
    </source>
</evidence>
<evidence type="ECO:0000269" key="8">
    <source>
    </source>
</evidence>
<evidence type="ECO:0000269" key="9">
    <source>
    </source>
</evidence>
<evidence type="ECO:0000303" key="10">
    <source>
    </source>
</evidence>
<evidence type="ECO:0000303" key="11">
    <source>
    </source>
</evidence>
<evidence type="ECO:0000305" key="12"/>
<evidence type="ECO:0000305" key="13">
    <source>
    </source>
</evidence>
<evidence type="ECO:0000305" key="14">
    <source>
    </source>
</evidence>
<evidence type="ECO:0007744" key="15">
    <source>
    </source>
</evidence>
<reference key="1">
    <citation type="journal article" date="1998" name="Mol. Gen. Genet.">
        <title>Characterisation of Saccharomyces cerevisiae ARO8 and ARO9 genes encoding aromatic aminotransferases I and II reveals a new aminotransferase subfamily.</title>
        <authorList>
            <person name="Iraqui I."/>
            <person name="Vissers S."/>
            <person name="Cartiaux M."/>
            <person name="Urrestarazu A."/>
        </authorList>
    </citation>
    <scope>NUCLEOTIDE SEQUENCE [GENOMIC DNA]</scope>
    <scope>FUNCTION</scope>
    <scope>INDUCTION</scope>
    <source>
        <strain>Sigma 1278B</strain>
    </source>
</reference>
<reference key="2">
    <citation type="journal article" date="1994" name="Science">
        <title>Complete nucleotide sequence of Saccharomyces cerevisiae chromosome VIII.</title>
        <authorList>
            <person name="Johnston M."/>
            <person name="Andrews S."/>
            <person name="Brinkman R."/>
            <person name="Cooper J."/>
            <person name="Ding H."/>
            <person name="Dover J."/>
            <person name="Du Z."/>
            <person name="Favello A."/>
            <person name="Fulton L."/>
            <person name="Gattung S."/>
            <person name="Geisel C."/>
            <person name="Kirsten J."/>
            <person name="Kucaba T."/>
            <person name="Hillier L.W."/>
            <person name="Jier M."/>
            <person name="Johnston L."/>
            <person name="Langston Y."/>
            <person name="Latreille P."/>
            <person name="Louis E.J."/>
            <person name="Macri C."/>
            <person name="Mardis E."/>
            <person name="Menezes S."/>
            <person name="Mouser L."/>
            <person name="Nhan M."/>
            <person name="Rifkin L."/>
            <person name="Riles L."/>
            <person name="St Peter H."/>
            <person name="Trevaskis E."/>
            <person name="Vaughan K."/>
            <person name="Vignati D."/>
            <person name="Wilcox L."/>
            <person name="Wohldman P."/>
            <person name="Waterston R."/>
            <person name="Wilson R."/>
            <person name="Vaudin M."/>
        </authorList>
    </citation>
    <scope>NUCLEOTIDE SEQUENCE [LARGE SCALE GENOMIC DNA]</scope>
    <source>
        <strain>ATCC 204508 / S288c</strain>
    </source>
</reference>
<reference key="3">
    <citation type="journal article" date="2014" name="G3 (Bethesda)">
        <title>The reference genome sequence of Saccharomyces cerevisiae: Then and now.</title>
        <authorList>
            <person name="Engel S.R."/>
            <person name="Dietrich F.S."/>
            <person name="Fisk D.G."/>
            <person name="Binkley G."/>
            <person name="Balakrishnan R."/>
            <person name="Costanzo M.C."/>
            <person name="Dwight S.S."/>
            <person name="Hitz B.C."/>
            <person name="Karra K."/>
            <person name="Nash R.S."/>
            <person name="Weng S."/>
            <person name="Wong E.D."/>
            <person name="Lloyd P."/>
            <person name="Skrzypek M.S."/>
            <person name="Miyasato S.R."/>
            <person name="Simison M."/>
            <person name="Cherry J.M."/>
        </authorList>
    </citation>
    <scope>GENOME REANNOTATION</scope>
    <source>
        <strain>ATCC 204508 / S288c</strain>
    </source>
</reference>
<reference key="4">
    <citation type="journal article" date="1982" name="Arch. Microbiol.">
        <title>Tryptophan degradation in Saccharomyces cerevisiae: characterization of two aromatic aminotransferases.</title>
        <authorList>
            <person name="Kradolfer P."/>
            <person name="Niederberger P."/>
            <person name="Hutter R."/>
        </authorList>
    </citation>
    <scope>FUNCTION</scope>
    <scope>CATALYTIC ACTIVITY</scope>
    <scope>BIOPHYSICOCHEMICAL PROPERTIES</scope>
</reference>
<reference key="5">
    <citation type="journal article" date="1998" name="Mol. Gen. Genet.">
        <title>Phenylalanine- and tyrosine-auxotrophic mutants of Saccharomyces cerevisiae impaired in transamination.</title>
        <authorList>
            <person name="Urrestarazu A."/>
            <person name="Vissers S."/>
            <person name="Iraqui I."/>
            <person name="Grenson M."/>
        </authorList>
    </citation>
    <scope>FUNCTION</scope>
</reference>
<reference key="6">
    <citation type="journal article" date="1999" name="Mol. Cell. Biol.">
        <title>Transcriptional induction by aromatic amino acids in Saccharomyces cerevisiae.</title>
        <authorList>
            <person name="Iraqui I."/>
            <person name="Vissers S."/>
            <person name="Andre B."/>
            <person name="Urrestarazu A."/>
        </authorList>
    </citation>
    <scope>INDUCTION</scope>
</reference>
<reference key="7">
    <citation type="journal article" date="2003" name="Nature">
        <title>Global analysis of protein localization in budding yeast.</title>
        <authorList>
            <person name="Huh W.-K."/>
            <person name="Falvo J.V."/>
            <person name="Gerke L.C."/>
            <person name="Carroll A.S."/>
            <person name="Howson R.W."/>
            <person name="Weissman J.S."/>
            <person name="O'Shea E.K."/>
        </authorList>
    </citation>
    <scope>SUBCELLULAR LOCATION [LARGE SCALE ANALYSIS]</scope>
</reference>
<reference key="8">
    <citation type="journal article" date="2003" name="Nature">
        <title>Global analysis of protein expression in yeast.</title>
        <authorList>
            <person name="Ghaemmaghami S."/>
            <person name="Huh W.-K."/>
            <person name="Bower K."/>
            <person name="Howson R.W."/>
            <person name="Belle A."/>
            <person name="Dephoure N."/>
            <person name="O'Shea E.K."/>
            <person name="Weissman J.S."/>
        </authorList>
    </citation>
    <scope>LEVEL OF PROTEIN EXPRESSION [LARGE SCALE ANALYSIS]</scope>
</reference>
<reference key="9">
    <citation type="journal article" date="2007" name="J. Proteome Res.">
        <title>Large-scale phosphorylation analysis of alpha-factor-arrested Saccharomyces cerevisiae.</title>
        <authorList>
            <person name="Li X."/>
            <person name="Gerber S.A."/>
            <person name="Rudner A.D."/>
            <person name="Beausoleil S.A."/>
            <person name="Haas W."/>
            <person name="Villen J."/>
            <person name="Elias J.E."/>
            <person name="Gygi S.P."/>
        </authorList>
    </citation>
    <scope>IDENTIFICATION BY MASS SPECTROMETRY [LARGE SCALE ANALYSIS]</scope>
    <source>
        <strain>ADR376</strain>
    </source>
</reference>
<reference key="10">
    <citation type="journal article" date="2008" name="FEBS J.">
        <title>A complete inventory of all enzymes in the eukaryotic methionine salvage pathway.</title>
        <authorList>
            <person name="Pirkov I."/>
            <person name="Norbeck J."/>
            <person name="Gustafsson L."/>
            <person name="Albers E."/>
        </authorList>
    </citation>
    <scope>FUNCTION</scope>
</reference>
<reference key="11">
    <citation type="journal article" date="2008" name="Mol. Cell. Proteomics">
        <title>A multidimensional chromatography technology for in-depth phosphoproteome analysis.</title>
        <authorList>
            <person name="Albuquerque C.P."/>
            <person name="Smolka M.B."/>
            <person name="Payne S.H."/>
            <person name="Bafna V."/>
            <person name="Eng J."/>
            <person name="Zhou H."/>
        </authorList>
    </citation>
    <scope>PHOSPHORYLATION [LARGE SCALE ANALYSIS] AT SER-90 AND SER-92</scope>
    <scope>IDENTIFICATION BY MASS SPECTROMETRY [LARGE SCALE ANALYSIS]</scope>
</reference>
<reference key="12">
    <citation type="journal article" date="2009" name="Science">
        <title>Global analysis of Cdk1 substrate phosphorylation sites provides insights into evolution.</title>
        <authorList>
            <person name="Holt L.J."/>
            <person name="Tuch B.B."/>
            <person name="Villen J."/>
            <person name="Johnson A.D."/>
            <person name="Gygi S.P."/>
            <person name="Morgan D.O."/>
        </authorList>
    </citation>
    <scope>IDENTIFICATION BY MASS SPECTROMETRY [LARGE SCALE ANALYSIS]</scope>
</reference>
<gene>
    <name evidence="11" type="primary">ARO9</name>
    <name type="ordered locus">YHR137W</name>
</gene>
<name>ARO9_YEAST</name>